<comment type="subcellular location">
    <subcellularLocation>
        <location evidence="3">Secreted</location>
    </subcellularLocation>
</comment>
<comment type="similarity">
    <text evidence="3">Belongs to the cysteine-rich repeat secretory protein family.</text>
</comment>
<organism>
    <name type="scientific">Arabidopsis thaliana</name>
    <name type="common">Mouse-ear cress</name>
    <dbReference type="NCBI Taxonomy" id="3702"/>
    <lineage>
        <taxon>Eukaryota</taxon>
        <taxon>Viridiplantae</taxon>
        <taxon>Streptophyta</taxon>
        <taxon>Embryophyta</taxon>
        <taxon>Tracheophyta</taxon>
        <taxon>Spermatophyta</taxon>
        <taxon>Magnoliopsida</taxon>
        <taxon>eudicotyledons</taxon>
        <taxon>Gunneridae</taxon>
        <taxon>Pentapetalae</taxon>
        <taxon>rosids</taxon>
        <taxon>malvids</taxon>
        <taxon>Brassicales</taxon>
        <taxon>Brassicaceae</taxon>
        <taxon>Camelineae</taxon>
        <taxon>Arabidopsis</taxon>
    </lineage>
</organism>
<proteinExistence type="evidence at transcript level"/>
<accession>Q9LRJ9</accession>
<accession>Q84J93</accession>
<accession>Q84JX5</accession>
<accession>Q84UG5</accession>
<gene>
    <name type="primary">CRRSP38</name>
    <name type="ordered locus">At3g22060</name>
    <name type="ORF">MZN24.26</name>
</gene>
<dbReference type="EMBL" id="AB028622">
    <property type="protein sequence ID" value="BAB01391.1"/>
    <property type="molecule type" value="Genomic_DNA"/>
</dbReference>
<dbReference type="EMBL" id="CP002686">
    <property type="protein sequence ID" value="AEE76585.1"/>
    <property type="molecule type" value="Genomic_DNA"/>
</dbReference>
<dbReference type="EMBL" id="AY034900">
    <property type="protein sequence ID" value="AAK59407.1"/>
    <property type="molecule type" value="mRNA"/>
</dbReference>
<dbReference type="EMBL" id="BT024900">
    <property type="protein sequence ID" value="ABD91491.1"/>
    <property type="molecule type" value="mRNA"/>
</dbReference>
<dbReference type="EMBL" id="AY140430">
    <property type="protein sequence ID" value="AAN46194.1"/>
    <property type="molecule type" value="Genomic_DNA"/>
</dbReference>
<dbReference type="EMBL" id="AY140431">
    <property type="protein sequence ID" value="AAN46195.1"/>
    <property type="molecule type" value="Genomic_DNA"/>
</dbReference>
<dbReference type="EMBL" id="AY140432">
    <property type="protein sequence ID" value="AAN46196.1"/>
    <property type="molecule type" value="Genomic_DNA"/>
</dbReference>
<dbReference type="EMBL" id="AY140433">
    <property type="protein sequence ID" value="AAN46197.1"/>
    <property type="molecule type" value="Genomic_DNA"/>
</dbReference>
<dbReference type="EMBL" id="AY140434">
    <property type="protein sequence ID" value="AAN46198.1"/>
    <property type="molecule type" value="Genomic_DNA"/>
</dbReference>
<dbReference type="EMBL" id="AY140435">
    <property type="protein sequence ID" value="AAN46199.1"/>
    <property type="molecule type" value="Genomic_DNA"/>
</dbReference>
<dbReference type="EMBL" id="AY140436">
    <property type="protein sequence ID" value="AAN46200.1"/>
    <property type="molecule type" value="Genomic_DNA"/>
</dbReference>
<dbReference type="EMBL" id="AY140437">
    <property type="protein sequence ID" value="AAN46201.1"/>
    <property type="molecule type" value="Genomic_DNA"/>
</dbReference>
<dbReference type="EMBL" id="AY140438">
    <property type="protein sequence ID" value="AAN46202.1"/>
    <property type="molecule type" value="Genomic_DNA"/>
</dbReference>
<dbReference type="EMBL" id="AY140439">
    <property type="protein sequence ID" value="AAN46203.1"/>
    <property type="molecule type" value="Genomic_DNA"/>
</dbReference>
<dbReference type="EMBL" id="AY140440">
    <property type="protein sequence ID" value="AAN46204.1"/>
    <property type="molecule type" value="Genomic_DNA"/>
</dbReference>
<dbReference type="EMBL" id="AY140441">
    <property type="protein sequence ID" value="AAN46205.1"/>
    <property type="molecule type" value="Genomic_DNA"/>
</dbReference>
<dbReference type="RefSeq" id="NP_566697.1">
    <property type="nucleotide sequence ID" value="NM_113102.4"/>
</dbReference>
<dbReference type="SMR" id="Q9LRJ9"/>
<dbReference type="BioGRID" id="7100">
    <property type="interactions" value="5"/>
</dbReference>
<dbReference type="FunCoup" id="Q9LRJ9">
    <property type="interactions" value="66"/>
</dbReference>
<dbReference type="IntAct" id="Q9LRJ9">
    <property type="interactions" value="5"/>
</dbReference>
<dbReference type="STRING" id="3702.Q9LRJ9"/>
<dbReference type="PaxDb" id="3702-AT3G22060.1"/>
<dbReference type="ProteomicsDB" id="224412"/>
<dbReference type="EnsemblPlants" id="AT3G22060.1">
    <property type="protein sequence ID" value="AT3G22060.1"/>
    <property type="gene ID" value="AT3G22060"/>
</dbReference>
<dbReference type="GeneID" id="821768"/>
<dbReference type="Gramene" id="AT3G22060.1">
    <property type="protein sequence ID" value="AT3G22060.1"/>
    <property type="gene ID" value="AT3G22060"/>
</dbReference>
<dbReference type="KEGG" id="ath:AT3G22060"/>
<dbReference type="Araport" id="AT3G22060"/>
<dbReference type="TAIR" id="AT3G22060"/>
<dbReference type="eggNOG" id="ENOG502QPWH">
    <property type="taxonomic scope" value="Eukaryota"/>
</dbReference>
<dbReference type="HOGENOM" id="CLU_000288_35_0_1"/>
<dbReference type="InParanoid" id="Q9LRJ9"/>
<dbReference type="OMA" id="ESCKACL"/>
<dbReference type="OrthoDB" id="696781at2759"/>
<dbReference type="PhylomeDB" id="Q9LRJ9"/>
<dbReference type="PRO" id="PR:Q9LRJ9"/>
<dbReference type="Proteomes" id="UP000006548">
    <property type="component" value="Chromosome 3"/>
</dbReference>
<dbReference type="ExpressionAtlas" id="Q9LRJ9">
    <property type="expression patterns" value="baseline and differential"/>
</dbReference>
<dbReference type="GO" id="GO:0005829">
    <property type="term" value="C:cytosol"/>
    <property type="evidence" value="ECO:0007005"/>
    <property type="project" value="TAIR"/>
</dbReference>
<dbReference type="GO" id="GO:0005576">
    <property type="term" value="C:extracellular region"/>
    <property type="evidence" value="ECO:0007669"/>
    <property type="project" value="UniProtKB-SubCell"/>
</dbReference>
<dbReference type="GO" id="GO:0000325">
    <property type="term" value="C:plant-type vacuole"/>
    <property type="evidence" value="ECO:0007005"/>
    <property type="project" value="TAIR"/>
</dbReference>
<dbReference type="GO" id="GO:0099503">
    <property type="term" value="C:secretory vesicle"/>
    <property type="evidence" value="ECO:0007005"/>
    <property type="project" value="TAIR"/>
</dbReference>
<dbReference type="GO" id="GO:0009737">
    <property type="term" value="P:response to abscisic acid"/>
    <property type="evidence" value="ECO:0000270"/>
    <property type="project" value="TAIR"/>
</dbReference>
<dbReference type="CDD" id="cd23509">
    <property type="entry name" value="Gnk2-like"/>
    <property type="match status" value="2"/>
</dbReference>
<dbReference type="FunFam" id="3.30.430.20:FF:000002">
    <property type="entry name" value="Cysteine-rich receptor-like protein kinase 10"/>
    <property type="match status" value="1"/>
</dbReference>
<dbReference type="FunFam" id="3.30.430.20:FF:000003">
    <property type="entry name" value="Cysteine-rich RLK (RECEPTOR-like protein kinase) 10"/>
    <property type="match status" value="1"/>
</dbReference>
<dbReference type="Gene3D" id="3.30.430.20">
    <property type="entry name" value="Gnk2 domain, C-X8-C-X2-C motif"/>
    <property type="match status" value="2"/>
</dbReference>
<dbReference type="InterPro" id="IPR050581">
    <property type="entry name" value="CRR_secretory_protein"/>
</dbReference>
<dbReference type="InterPro" id="IPR002902">
    <property type="entry name" value="GNK2"/>
</dbReference>
<dbReference type="InterPro" id="IPR038408">
    <property type="entry name" value="GNK2_sf"/>
</dbReference>
<dbReference type="PANTHER" id="PTHR32411:SF43">
    <property type="entry name" value="CYSTEINE-RICH REPEAT SECRETORY PROTEIN 38"/>
    <property type="match status" value="1"/>
</dbReference>
<dbReference type="PANTHER" id="PTHR32411">
    <property type="entry name" value="CYSTEINE-RICH REPEAT SECRETORY PROTEIN 38-RELATED"/>
    <property type="match status" value="1"/>
</dbReference>
<dbReference type="Pfam" id="PF01657">
    <property type="entry name" value="Stress-antifung"/>
    <property type="match status" value="2"/>
</dbReference>
<dbReference type="PROSITE" id="PS51473">
    <property type="entry name" value="GNK2"/>
    <property type="match status" value="2"/>
</dbReference>
<name>CRR38_ARATH</name>
<reference key="1">
    <citation type="journal article" date="2000" name="DNA Res.">
        <title>Structural analysis of Arabidopsis thaliana chromosome 3. I. Sequence features of the regions of 4,504,864 bp covered by sixty P1 and TAC clones.</title>
        <authorList>
            <person name="Sato S."/>
            <person name="Nakamura Y."/>
            <person name="Kaneko T."/>
            <person name="Katoh T."/>
            <person name="Asamizu E."/>
            <person name="Tabata S."/>
        </authorList>
    </citation>
    <scope>NUCLEOTIDE SEQUENCE [LARGE SCALE GENOMIC DNA]</scope>
    <source>
        <strain>cv. Columbia</strain>
    </source>
</reference>
<reference key="2">
    <citation type="journal article" date="2017" name="Plant J.">
        <title>Araport11: a complete reannotation of the Arabidopsis thaliana reference genome.</title>
        <authorList>
            <person name="Cheng C.Y."/>
            <person name="Krishnakumar V."/>
            <person name="Chan A.P."/>
            <person name="Thibaud-Nissen F."/>
            <person name="Schobel S."/>
            <person name="Town C.D."/>
        </authorList>
    </citation>
    <scope>GENOME REANNOTATION</scope>
    <source>
        <strain>cv. Columbia</strain>
    </source>
</reference>
<reference key="3">
    <citation type="journal article" date="2003" name="Science">
        <title>Empirical analysis of transcriptional activity in the Arabidopsis genome.</title>
        <authorList>
            <person name="Yamada K."/>
            <person name="Lim J."/>
            <person name="Dale J.M."/>
            <person name="Chen H."/>
            <person name="Shinn P."/>
            <person name="Palm C.J."/>
            <person name="Southwick A.M."/>
            <person name="Wu H.C."/>
            <person name="Kim C.J."/>
            <person name="Nguyen M."/>
            <person name="Pham P.K."/>
            <person name="Cheuk R.F."/>
            <person name="Karlin-Newmann G."/>
            <person name="Liu S.X."/>
            <person name="Lam B."/>
            <person name="Sakano H."/>
            <person name="Wu T."/>
            <person name="Yu G."/>
            <person name="Miranda M."/>
            <person name="Quach H.L."/>
            <person name="Tripp M."/>
            <person name="Chang C.H."/>
            <person name="Lee J.M."/>
            <person name="Toriumi M.J."/>
            <person name="Chan M.M."/>
            <person name="Tang C.C."/>
            <person name="Onodera C.S."/>
            <person name="Deng J.M."/>
            <person name="Akiyama K."/>
            <person name="Ansari Y."/>
            <person name="Arakawa T."/>
            <person name="Banh J."/>
            <person name="Banno F."/>
            <person name="Bowser L."/>
            <person name="Brooks S.Y."/>
            <person name="Carninci P."/>
            <person name="Chao Q."/>
            <person name="Choy N."/>
            <person name="Enju A."/>
            <person name="Goldsmith A.D."/>
            <person name="Gurjal M."/>
            <person name="Hansen N.F."/>
            <person name="Hayashizaki Y."/>
            <person name="Johnson-Hopson C."/>
            <person name="Hsuan V.W."/>
            <person name="Iida K."/>
            <person name="Karnes M."/>
            <person name="Khan S."/>
            <person name="Koesema E."/>
            <person name="Ishida J."/>
            <person name="Jiang P.X."/>
            <person name="Jones T."/>
            <person name="Kawai J."/>
            <person name="Kamiya A."/>
            <person name="Meyers C."/>
            <person name="Nakajima M."/>
            <person name="Narusaka M."/>
            <person name="Seki M."/>
            <person name="Sakurai T."/>
            <person name="Satou M."/>
            <person name="Tamse R."/>
            <person name="Vaysberg M."/>
            <person name="Wallender E.K."/>
            <person name="Wong C."/>
            <person name="Yamamura Y."/>
            <person name="Yuan S."/>
            <person name="Shinozaki K."/>
            <person name="Davis R.W."/>
            <person name="Theologis A."/>
            <person name="Ecker J.R."/>
        </authorList>
    </citation>
    <scope>NUCLEOTIDE SEQUENCE [LARGE SCALE MRNA]</scope>
    <source>
        <strain>cv. Columbia</strain>
    </source>
</reference>
<reference key="4">
    <citation type="submission" date="2006-03" db="EMBL/GenBank/DDBJ databases">
        <title>Arabidopsis ORF clones.</title>
        <authorList>
            <person name="Shinn P."/>
            <person name="Chen H."/>
            <person name="Kim C.J."/>
            <person name="Ecker J.R."/>
        </authorList>
    </citation>
    <scope>NUCLEOTIDE SEQUENCE [LARGE SCALE MRNA]</scope>
    <source>
        <strain>cv. Columbia</strain>
    </source>
</reference>
<reference key="5">
    <citation type="journal article" date="2003" name="Genetics">
        <title>Selection on rapidly evolving proteins in the Arabidopsis genome.</title>
        <authorList>
            <person name="Barrier M."/>
            <person name="Bustamante C.D."/>
            <person name="Yu J."/>
            <person name="Purugganan M.D."/>
        </authorList>
    </citation>
    <scope>NUCLEOTIDE SEQUENCE [GENOMIC DNA] OF 16-215</scope>
    <source>
        <strain>cv. Bla-1</strain>
        <strain>cv. Bretagny</strain>
        <strain>cv. Bs-1</strain>
        <strain>cv. Bu-0</strain>
        <strain>cv. Chi-1</strain>
        <strain>cv. Co-1</strain>
        <strain>cv. Gr-3</strain>
        <strain>cv. Hau-0</strain>
        <strain>cv. Jl-1</strain>
        <strain>cv. Kas-1</strain>
        <strain>cv. Kent</strain>
        <strain>cv. Lisse</strain>
    </source>
</reference>
<reference key="6">
    <citation type="journal article" date="2001" name="Plant Physiol.">
        <title>A superfamily of proteins with novel cysteine-rich repeats.</title>
        <authorList>
            <person name="Chen Z."/>
        </authorList>
    </citation>
    <scope>GENE FAMILY ORGANIZATION</scope>
    <scope>NOMENCLATURE</scope>
</reference>
<keyword id="KW-1185">Reference proteome</keyword>
<keyword id="KW-0677">Repeat</keyword>
<keyword id="KW-0964">Secreted</keyword>
<keyword id="KW-0732">Signal</keyword>
<evidence type="ECO:0000255" key="1"/>
<evidence type="ECO:0000255" key="2">
    <source>
        <dbReference type="PROSITE-ProRule" id="PRU00806"/>
    </source>
</evidence>
<evidence type="ECO:0000305" key="3"/>
<sequence length="252" mass="27864">MSSLKRIVWFPILAIAIQILSIHTVLSQSQNNAFLFHKCSDIEGSFTSKSLYESNLNNLFSQLSYKVPSTGFAASSTGNTPNNVNGLALCRGDASSSDCRSCLETAIPELRQRCPNNKAGIVWYDNCLVKYSSTNFFGKIDFENRFYLYNVKNVSDPSTFNSQTKALLTELTKKATTRDNQKLFATGEKNIGKNKLYGLVQCTRDLKSITCKACLNGIIGELPNCCDGKEGGRVVGGSCNFRYEIYPFVKTA</sequence>
<protein>
    <recommendedName>
        <fullName>Cysteine-rich repeat secretory protein 38</fullName>
    </recommendedName>
</protein>
<feature type="signal peptide" evidence="1">
    <location>
        <begin position="1"/>
        <end position="27"/>
    </location>
</feature>
<feature type="chain" id="PRO_0000296166" description="Cysteine-rich repeat secretory protein 38">
    <location>
        <begin position="28"/>
        <end position="252"/>
    </location>
</feature>
<feature type="domain" description="Gnk2-homologous 1" evidence="2">
    <location>
        <begin position="34"/>
        <end position="136"/>
    </location>
</feature>
<feature type="domain" description="Gnk2-homologous 2" evidence="2">
    <location>
        <begin position="142"/>
        <end position="248"/>
    </location>
</feature>
<feature type="sequence variant" description="In strain: cv. Bla-1 and cv. Bu-0.">
    <original>Y</original>
    <variation>S</variation>
    <location>
        <position position="147"/>
    </location>
</feature>
<feature type="sequence variant" description="In strain: cv. Bla-1 and cv. Bu-0.">
    <original>T</original>
    <variation>A</variation>
    <location>
        <position position="172"/>
    </location>
</feature>
<feature type="sequence variant" description="In strain: cv. Bretagny.">
    <original>N</original>
    <variation>I</variation>
    <location>
        <position position="190"/>
    </location>
</feature>
<feature type="sequence variant" description="In strain: cv. Bla-1 and cv. Bu-0.">
    <original>I</original>
    <variation>L</variation>
    <location>
        <position position="191"/>
    </location>
</feature>
<feature type="sequence variant" description="In strain: cv. Bla-1 and cv. Bu-0.">
    <original>IT</original>
    <variation>TA</variation>
    <location>
        <begin position="209"/>
        <end position="210"/>
    </location>
</feature>